<name>COX2_CHLAE</name>
<organism>
    <name type="scientific">Chlorocebus aethiops</name>
    <name type="common">Green monkey</name>
    <name type="synonym">Cercopithecus aethiops</name>
    <dbReference type="NCBI Taxonomy" id="9534"/>
    <lineage>
        <taxon>Eukaryota</taxon>
        <taxon>Metazoa</taxon>
        <taxon>Chordata</taxon>
        <taxon>Craniata</taxon>
        <taxon>Vertebrata</taxon>
        <taxon>Euteleostomi</taxon>
        <taxon>Mammalia</taxon>
        <taxon>Eutheria</taxon>
        <taxon>Euarchontoglires</taxon>
        <taxon>Primates</taxon>
        <taxon>Haplorrhini</taxon>
        <taxon>Catarrhini</taxon>
        <taxon>Cercopithecidae</taxon>
        <taxon>Cercopithecinae</taxon>
        <taxon>Chlorocebus</taxon>
    </lineage>
</organism>
<sequence length="227" mass="25549">MAHPVQLGLQDATSPVMEELITFHDYALMTISLISFLVLYALFSTLTTKLTNTNITDAQEMETTWTILPAVILILIALPSLRILYLTDEINNPSFTIKSIGHQWYWTYEYTDYGGLIFNSYMLPPLFLNPGDLRLLEVDNRVVLPIEAPVRMMITSQDVLHSWTIPTLGLKTDAVPGRLNQTTFTATRPGVYYGQCSEICGANHSFMPIVAELIPLKIFEMGPVFTL</sequence>
<accession>P26455</accession>
<keyword id="KW-0186">Copper</keyword>
<keyword id="KW-0249">Electron transport</keyword>
<keyword id="KW-0460">Magnesium</keyword>
<keyword id="KW-0472">Membrane</keyword>
<keyword id="KW-0479">Metal-binding</keyword>
<keyword id="KW-0496">Mitochondrion</keyword>
<keyword id="KW-0999">Mitochondrion inner membrane</keyword>
<keyword id="KW-0679">Respiratory chain</keyword>
<keyword id="KW-1278">Translocase</keyword>
<keyword id="KW-0812">Transmembrane</keyword>
<keyword id="KW-1133">Transmembrane helix</keyword>
<keyword id="KW-0813">Transport</keyword>
<proteinExistence type="inferred from homology"/>
<dbReference type="EC" id="7.1.1.9"/>
<dbReference type="EMBL" id="M58005">
    <property type="protein sequence ID" value="AAA31619.1"/>
    <property type="molecule type" value="Genomic_DNA"/>
</dbReference>
<dbReference type="PIR" id="I36905">
    <property type="entry name" value="I36905"/>
</dbReference>
<dbReference type="SMR" id="P26455"/>
<dbReference type="IntAct" id="P26455">
    <property type="interactions" value="1"/>
</dbReference>
<dbReference type="GO" id="GO:0005743">
    <property type="term" value="C:mitochondrial inner membrane"/>
    <property type="evidence" value="ECO:0007669"/>
    <property type="project" value="UniProtKB-SubCell"/>
</dbReference>
<dbReference type="GO" id="GO:0005739">
    <property type="term" value="C:mitochondrion"/>
    <property type="evidence" value="ECO:0000250"/>
    <property type="project" value="UniProtKB"/>
</dbReference>
<dbReference type="GO" id="GO:0045277">
    <property type="term" value="C:respiratory chain complex IV"/>
    <property type="evidence" value="ECO:0000250"/>
    <property type="project" value="UniProtKB"/>
</dbReference>
<dbReference type="GO" id="GO:0005507">
    <property type="term" value="F:copper ion binding"/>
    <property type="evidence" value="ECO:0007669"/>
    <property type="project" value="InterPro"/>
</dbReference>
<dbReference type="GO" id="GO:0004129">
    <property type="term" value="F:cytochrome-c oxidase activity"/>
    <property type="evidence" value="ECO:0007669"/>
    <property type="project" value="UniProtKB-EC"/>
</dbReference>
<dbReference type="GO" id="GO:0042773">
    <property type="term" value="P:ATP synthesis coupled electron transport"/>
    <property type="evidence" value="ECO:0007669"/>
    <property type="project" value="TreeGrafter"/>
</dbReference>
<dbReference type="CDD" id="cd13912">
    <property type="entry name" value="CcO_II_C"/>
    <property type="match status" value="1"/>
</dbReference>
<dbReference type="FunFam" id="1.10.287.90:FF:000001">
    <property type="entry name" value="Cytochrome c oxidase subunit 2"/>
    <property type="match status" value="1"/>
</dbReference>
<dbReference type="FunFam" id="2.60.40.420:FF:000001">
    <property type="entry name" value="Cytochrome c oxidase subunit 2"/>
    <property type="match status" value="1"/>
</dbReference>
<dbReference type="Gene3D" id="1.10.287.90">
    <property type="match status" value="1"/>
</dbReference>
<dbReference type="Gene3D" id="2.60.40.420">
    <property type="entry name" value="Cupredoxins - blue copper proteins"/>
    <property type="match status" value="1"/>
</dbReference>
<dbReference type="InterPro" id="IPR045187">
    <property type="entry name" value="CcO_II"/>
</dbReference>
<dbReference type="InterPro" id="IPR002429">
    <property type="entry name" value="CcO_II-like_C"/>
</dbReference>
<dbReference type="InterPro" id="IPR034210">
    <property type="entry name" value="CcO_II_C"/>
</dbReference>
<dbReference type="InterPro" id="IPR001505">
    <property type="entry name" value="Copper_CuA"/>
</dbReference>
<dbReference type="InterPro" id="IPR008972">
    <property type="entry name" value="Cupredoxin"/>
</dbReference>
<dbReference type="InterPro" id="IPR014222">
    <property type="entry name" value="Cyt_c_oxidase_su2"/>
</dbReference>
<dbReference type="InterPro" id="IPR011759">
    <property type="entry name" value="Cyt_c_oxidase_su2_TM_dom"/>
</dbReference>
<dbReference type="InterPro" id="IPR036257">
    <property type="entry name" value="Cyt_c_oxidase_su2_TM_sf"/>
</dbReference>
<dbReference type="NCBIfam" id="TIGR02866">
    <property type="entry name" value="CoxB"/>
    <property type="match status" value="1"/>
</dbReference>
<dbReference type="PANTHER" id="PTHR22888:SF9">
    <property type="entry name" value="CYTOCHROME C OXIDASE SUBUNIT 2"/>
    <property type="match status" value="1"/>
</dbReference>
<dbReference type="PANTHER" id="PTHR22888">
    <property type="entry name" value="CYTOCHROME C OXIDASE, SUBUNIT II"/>
    <property type="match status" value="1"/>
</dbReference>
<dbReference type="Pfam" id="PF00116">
    <property type="entry name" value="COX2"/>
    <property type="match status" value="1"/>
</dbReference>
<dbReference type="Pfam" id="PF02790">
    <property type="entry name" value="COX2_TM"/>
    <property type="match status" value="1"/>
</dbReference>
<dbReference type="PRINTS" id="PR01166">
    <property type="entry name" value="CYCOXIDASEII"/>
</dbReference>
<dbReference type="SUPFAM" id="SSF49503">
    <property type="entry name" value="Cupredoxins"/>
    <property type="match status" value="1"/>
</dbReference>
<dbReference type="SUPFAM" id="SSF81464">
    <property type="entry name" value="Cytochrome c oxidase subunit II-like, transmembrane region"/>
    <property type="match status" value="1"/>
</dbReference>
<dbReference type="PROSITE" id="PS00078">
    <property type="entry name" value="COX2"/>
    <property type="match status" value="1"/>
</dbReference>
<dbReference type="PROSITE" id="PS50857">
    <property type="entry name" value="COX2_CUA"/>
    <property type="match status" value="1"/>
</dbReference>
<dbReference type="PROSITE" id="PS50999">
    <property type="entry name" value="COX2_TM"/>
    <property type="match status" value="1"/>
</dbReference>
<geneLocation type="mitochondrion"/>
<gene>
    <name type="primary">MT-CO2</name>
    <name type="synonym">COII</name>
    <name type="synonym">COX2</name>
    <name type="synonym">COXII</name>
    <name type="synonym">MTCO2</name>
</gene>
<reference key="1">
    <citation type="journal article" date="1991" name="Proc. Natl. Acad. Sci. U.S.A.">
        <title>Resolution of the African hominoid trichotomy by use of a mitochondrial gene sequence.</title>
        <authorList>
            <person name="Ruvolo M."/>
            <person name="Disotell T.R."/>
            <person name="Allard M.W."/>
            <person name="Brown W.M."/>
            <person name="Honeycutt R.L."/>
        </authorList>
    </citation>
    <scope>NUCLEOTIDE SEQUENCE [GENOMIC DNA]</scope>
</reference>
<comment type="function">
    <text evidence="2">Component of the cytochrome c oxidase, the last enzyme in the mitochondrial electron transport chain which drives oxidative phosphorylation. The respiratory chain contains 3 multisubunit complexes succinate dehydrogenase (complex II, CII), ubiquinol-cytochrome c oxidoreductase (cytochrome b-c1 complex, complex III, CIII) and cytochrome c oxidase (complex IV, CIV), that cooperate to transfer electrons derived from NADH and succinate to molecular oxygen, creating an electrochemical gradient over the inner membrane that drives transmembrane transport and the ATP synthase. Cytochrome c oxidase is the component of the respiratory chain that catalyzes the reduction of oxygen to water. Electrons originating from reduced cytochrome c in the intermembrane space (IMS) are transferred via the dinuclear copper A center (CU(A)) of subunit 2 and heme A of subunit 1 to the active site in subunit 1, a binuclear center (BNC) formed by heme A3 and copper B (CU(B)). The BNC reduces molecular oxygen to 2 water molecules using 4 electrons from cytochrome c in the IMS and 4 protons from the mitochondrial matrix.</text>
</comment>
<comment type="catalytic activity">
    <reaction evidence="2">
        <text>4 Fe(II)-[cytochrome c] + O2 + 8 H(+)(in) = 4 Fe(III)-[cytochrome c] + 2 H2O + 4 H(+)(out)</text>
        <dbReference type="Rhea" id="RHEA:11436"/>
        <dbReference type="Rhea" id="RHEA-COMP:10350"/>
        <dbReference type="Rhea" id="RHEA-COMP:14399"/>
        <dbReference type="ChEBI" id="CHEBI:15377"/>
        <dbReference type="ChEBI" id="CHEBI:15378"/>
        <dbReference type="ChEBI" id="CHEBI:15379"/>
        <dbReference type="ChEBI" id="CHEBI:29033"/>
        <dbReference type="ChEBI" id="CHEBI:29034"/>
        <dbReference type="EC" id="7.1.1.9"/>
    </reaction>
    <physiologicalReaction direction="left-to-right" evidence="2">
        <dbReference type="Rhea" id="RHEA:11437"/>
    </physiologicalReaction>
</comment>
<comment type="cofactor">
    <cofactor evidence="3">
        <name>Cu cation</name>
        <dbReference type="ChEBI" id="CHEBI:23378"/>
    </cofactor>
    <text evidence="3">Binds a dinuclear copper A center per subunit.</text>
</comment>
<comment type="subunit">
    <text evidence="1 3">Component of the cytochrome c oxidase (complex IV, CIV), a multisubunit enzyme composed of 14 subunits. The complex is composed of a catalytic core of 3 subunits MT-CO1, MT-CO2 and MT-CO3, encoded in the mitochondrial DNA, and 11 supernumerary subunits COX4I, COX5A, COX5B, COX6A, COX6B, COX6C, COX7A, COX7B, COX7C, COX8 and NDUFA4, which are encoded in the nuclear genome. The complex exists as a monomer or a dimer and forms supercomplexes (SCs) in the inner mitochondrial membrane with NADH-ubiquinone oxidoreductase (complex I, CI) and ubiquinol-cytochrome c oxidoreductase (cytochrome b-c1 complex, complex III, CIII), resulting in different assemblies (supercomplex SCI(1)III(2)IV(1) and megacomplex MCI(2)III(2)IV(2)) (By similarity). Found in a complex with TMEM177, COA6, COX18, COX20, SCO1 and SCO2. Interacts with TMEM177 in a COX20-dependent manner. Interacts with COX20. Interacts with COX16 (By similarity).</text>
</comment>
<comment type="subcellular location">
    <subcellularLocation>
        <location evidence="3">Mitochondrion inner membrane</location>
        <topology evidence="3">Multi-pass membrane protein</topology>
    </subcellularLocation>
</comment>
<comment type="similarity">
    <text evidence="4">Belongs to the cytochrome c oxidase subunit 2 family.</text>
</comment>
<evidence type="ECO:0000250" key="1">
    <source>
        <dbReference type="UniProtKB" id="P00403"/>
    </source>
</evidence>
<evidence type="ECO:0000250" key="2">
    <source>
        <dbReference type="UniProtKB" id="P00410"/>
    </source>
</evidence>
<evidence type="ECO:0000250" key="3">
    <source>
        <dbReference type="UniProtKB" id="P68530"/>
    </source>
</evidence>
<evidence type="ECO:0000305" key="4"/>
<feature type="chain" id="PRO_0000183542" description="Cytochrome c oxidase subunit 2">
    <location>
        <begin position="1"/>
        <end position="227"/>
    </location>
</feature>
<feature type="topological domain" description="Mitochondrial intermembrane" evidence="3">
    <location>
        <begin position="1"/>
        <end position="14"/>
    </location>
</feature>
<feature type="transmembrane region" description="Helical; Name=I" evidence="3">
    <location>
        <begin position="15"/>
        <end position="45"/>
    </location>
</feature>
<feature type="topological domain" description="Mitochondrial matrix" evidence="3">
    <location>
        <begin position="46"/>
        <end position="59"/>
    </location>
</feature>
<feature type="transmembrane region" description="Helical; Name=II" evidence="3">
    <location>
        <begin position="60"/>
        <end position="87"/>
    </location>
</feature>
<feature type="topological domain" description="Mitochondrial intermembrane" evidence="3">
    <location>
        <begin position="88"/>
        <end position="227"/>
    </location>
</feature>
<feature type="binding site" evidence="3">
    <location>
        <position position="161"/>
    </location>
    <ligand>
        <name>Cu cation</name>
        <dbReference type="ChEBI" id="CHEBI:23378"/>
        <label>A1</label>
    </ligand>
</feature>
<feature type="binding site" evidence="3">
    <location>
        <position position="196"/>
    </location>
    <ligand>
        <name>Cu cation</name>
        <dbReference type="ChEBI" id="CHEBI:23378"/>
        <label>A1</label>
    </ligand>
</feature>
<feature type="binding site" evidence="3">
    <location>
        <position position="196"/>
    </location>
    <ligand>
        <name>Cu cation</name>
        <dbReference type="ChEBI" id="CHEBI:23378"/>
        <label>A2</label>
    </ligand>
</feature>
<feature type="binding site" evidence="3">
    <location>
        <position position="198"/>
    </location>
    <ligand>
        <name>Cu cation</name>
        <dbReference type="ChEBI" id="CHEBI:23378"/>
        <label>A2</label>
    </ligand>
</feature>
<feature type="binding site" evidence="3">
    <location>
        <position position="198"/>
    </location>
    <ligand>
        <name>Mg(2+)</name>
        <dbReference type="ChEBI" id="CHEBI:18420"/>
        <note>ligand shared with MT-CO1</note>
    </ligand>
</feature>
<feature type="binding site" evidence="3">
    <location>
        <position position="200"/>
    </location>
    <ligand>
        <name>Cu cation</name>
        <dbReference type="ChEBI" id="CHEBI:23378"/>
        <label>A1</label>
    </ligand>
</feature>
<feature type="binding site" evidence="3">
    <location>
        <position position="200"/>
    </location>
    <ligand>
        <name>Cu cation</name>
        <dbReference type="ChEBI" id="CHEBI:23378"/>
        <label>A2</label>
    </ligand>
</feature>
<feature type="binding site" evidence="3">
    <location>
        <position position="204"/>
    </location>
    <ligand>
        <name>Cu cation</name>
        <dbReference type="ChEBI" id="CHEBI:23378"/>
        <label>A2</label>
    </ligand>
</feature>
<feature type="binding site" evidence="3">
    <location>
        <position position="207"/>
    </location>
    <ligand>
        <name>Cu cation</name>
        <dbReference type="ChEBI" id="CHEBI:23378"/>
        <label>A1</label>
    </ligand>
</feature>
<protein>
    <recommendedName>
        <fullName>Cytochrome c oxidase subunit 2</fullName>
        <ecNumber>7.1.1.9</ecNumber>
    </recommendedName>
    <alternativeName>
        <fullName>Cytochrome c oxidase polypeptide II</fullName>
    </alternativeName>
</protein>